<name>CRDL1_HUMAN</name>
<sequence>MRKKWKMGGMKYIFSLLFFLLLEGGKTEQVKHSETYCMFQDKKYRVGERWHPYLEPYGLVYCVNCICSENGNVLCSRVRCPNVHCLSPVHIPHLCCPRCPDSLPPVNNKVTSKSCEYNGTTYQHGELFVAEGLFQNRQPNQCTQCSCSEGNVYCGLKTCPKLTCAFPVSVPDSCCRVCRGDGELSWEHSDGDIFRQPANREARHSYHRSHYDPPPSRQAGGLSRFPGARSHRGALMDSQQASGTIVQIVINNKHKHGQVCVSNGKTYSHGESWHPNLRAFGIVECVLCTCNVTKQECKKIHCPNRYPCKYPQKIDGKCCKVCPGKKAKELPGQSFDNKGYFCGEETMPVYESVFMEDGETTRKIALETERPPQVEVHVWTIRKGILQHFHIEKISKRMFEELPHFKLVTRTTLSQWKIFTEGEAQISQMCSSRVCRTELEDLVKVLYLERSEKGHC</sequence>
<dbReference type="EMBL" id="AY608914">
    <property type="protein sequence ID" value="AAU25841.1"/>
    <property type="molecule type" value="mRNA"/>
</dbReference>
<dbReference type="EMBL" id="AK293106">
    <property type="protein sequence ID" value="BAF85795.1"/>
    <property type="molecule type" value="mRNA"/>
</dbReference>
<dbReference type="EMBL" id="AK297563">
    <property type="protein sequence ID" value="BAG59955.1"/>
    <property type="molecule type" value="mRNA"/>
</dbReference>
<dbReference type="EMBL" id="AK312270">
    <property type="status" value="NOT_ANNOTATED_CDS"/>
    <property type="molecule type" value="mRNA"/>
</dbReference>
<dbReference type="EMBL" id="AL049176">
    <property type="status" value="NOT_ANNOTATED_CDS"/>
    <property type="molecule type" value="Genomic_DNA"/>
</dbReference>
<dbReference type="EMBL" id="AL591489">
    <property type="status" value="NOT_ANNOTATED_CDS"/>
    <property type="molecule type" value="Genomic_DNA"/>
</dbReference>
<dbReference type="EMBL" id="CH471120">
    <property type="protein sequence ID" value="EAX02656.1"/>
    <property type="molecule type" value="Genomic_DNA"/>
</dbReference>
<dbReference type="EMBL" id="CH471120">
    <property type="protein sequence ID" value="EAX02657.1"/>
    <property type="molecule type" value="Genomic_DNA"/>
</dbReference>
<dbReference type="EMBL" id="BC002909">
    <property type="protein sequence ID" value="AAH02909.2"/>
    <property type="molecule type" value="mRNA"/>
</dbReference>
<dbReference type="CCDS" id="CCDS14553.1">
    <molecule id="Q9BU40-6"/>
</dbReference>
<dbReference type="CCDS" id="CCDS48148.2">
    <molecule id="Q9BU40-3"/>
</dbReference>
<dbReference type="CCDS" id="CCDS48149.1">
    <molecule id="Q9BU40-4"/>
</dbReference>
<dbReference type="CCDS" id="CCDS48150.1">
    <molecule id="Q9BU40-5"/>
</dbReference>
<dbReference type="RefSeq" id="NP_001137453.1">
    <molecule id="Q9BU40-4"/>
    <property type="nucleotide sequence ID" value="NM_001143981.2"/>
</dbReference>
<dbReference type="RefSeq" id="NP_001137454.1">
    <molecule id="Q9BU40-5"/>
    <property type="nucleotide sequence ID" value="NM_001143982.2"/>
</dbReference>
<dbReference type="RefSeq" id="NP_001137455.2">
    <molecule id="Q9BU40-3"/>
    <property type="nucleotide sequence ID" value="NM_001143983.3"/>
</dbReference>
<dbReference type="RefSeq" id="NP_001354133.1">
    <molecule id="Q9BU40-4"/>
    <property type="nucleotide sequence ID" value="NM_001367204.1"/>
</dbReference>
<dbReference type="RefSeq" id="NP_660277.2">
    <molecule id="Q9BU40-6"/>
    <property type="nucleotide sequence ID" value="NM_145234.3"/>
</dbReference>
<dbReference type="RefSeq" id="XP_005262278.1">
    <property type="nucleotide sequence ID" value="XM_005262221.1"/>
</dbReference>
<dbReference type="RefSeq" id="XP_005262279.1">
    <molecule id="Q9BU40-5"/>
    <property type="nucleotide sequence ID" value="XM_005262222.3"/>
</dbReference>
<dbReference type="RefSeq" id="XP_054184079.1">
    <molecule id="Q9BU40-5"/>
    <property type="nucleotide sequence ID" value="XM_054328104.1"/>
</dbReference>
<dbReference type="SMR" id="Q9BU40"/>
<dbReference type="BioGRID" id="124885">
    <property type="interactions" value="9"/>
</dbReference>
<dbReference type="FunCoup" id="Q9BU40">
    <property type="interactions" value="45"/>
</dbReference>
<dbReference type="IntAct" id="Q9BU40">
    <property type="interactions" value="10"/>
</dbReference>
<dbReference type="MINT" id="Q9BU40"/>
<dbReference type="STRING" id="9606.ENSP00000361112"/>
<dbReference type="GlyCosmos" id="Q9BU40">
    <property type="glycosylation" value="2 sites, No reported glycans"/>
</dbReference>
<dbReference type="GlyGen" id="Q9BU40">
    <property type="glycosylation" value="4 sites, 1 O-linked glycan (2 sites)"/>
</dbReference>
<dbReference type="iPTMnet" id="Q9BU40"/>
<dbReference type="PhosphoSitePlus" id="Q9BU40"/>
<dbReference type="BioMuta" id="CHRDL1"/>
<dbReference type="DMDM" id="27805644"/>
<dbReference type="MassIVE" id="Q9BU40"/>
<dbReference type="PaxDb" id="9606-ENSP00000361112"/>
<dbReference type="PeptideAtlas" id="Q9BU40"/>
<dbReference type="ProteomicsDB" id="12767"/>
<dbReference type="ProteomicsDB" id="20381"/>
<dbReference type="ProteomicsDB" id="79052">
    <molecule id="Q9BU40-3"/>
</dbReference>
<dbReference type="Antibodypedia" id="365">
    <property type="antibodies" value="297 antibodies from 28 providers"/>
</dbReference>
<dbReference type="DNASU" id="91851"/>
<dbReference type="Ensembl" id="ENST00000372042.6">
    <molecule id="Q9BU40-4"/>
    <property type="protein sequence ID" value="ENSP00000361112.1"/>
    <property type="gene ID" value="ENSG00000101938.15"/>
</dbReference>
<dbReference type="Ensembl" id="ENST00000394797.8">
    <molecule id="Q9BU40-6"/>
    <property type="protein sequence ID" value="ENSP00000378276.4"/>
    <property type="gene ID" value="ENSG00000101938.15"/>
</dbReference>
<dbReference type="Ensembl" id="ENST00000444321.2">
    <molecule id="Q9BU40-5"/>
    <property type="protein sequence ID" value="ENSP00000399739.2"/>
    <property type="gene ID" value="ENSG00000101938.15"/>
</dbReference>
<dbReference type="Ensembl" id="ENST00000482160.5">
    <molecule id="Q9BU40-3"/>
    <property type="protein sequence ID" value="ENSP00000418443.1"/>
    <property type="gene ID" value="ENSG00000101938.15"/>
</dbReference>
<dbReference type="GeneID" id="91851"/>
<dbReference type="KEGG" id="hsa:91851"/>
<dbReference type="MANE-Select" id="ENST00000372042.6">
    <molecule id="Q9BU40-4"/>
    <property type="protein sequence ID" value="ENSP00000361112.1"/>
    <property type="RefSeq nucleotide sequence ID" value="NM_001143981.2"/>
    <property type="RefSeq protein sequence ID" value="NP_001137453.1"/>
</dbReference>
<dbReference type="UCSC" id="uc004eou.5">
    <molecule id="Q9BU40-6"/>
    <property type="organism name" value="human"/>
</dbReference>
<dbReference type="AGR" id="HGNC:29861"/>
<dbReference type="CTD" id="91851"/>
<dbReference type="DisGeNET" id="91851"/>
<dbReference type="GeneCards" id="CHRDL1"/>
<dbReference type="HGNC" id="HGNC:29861">
    <property type="gene designation" value="CHRDL1"/>
</dbReference>
<dbReference type="HPA" id="ENSG00000101938">
    <property type="expression patterns" value="Tissue enhanced (seminal)"/>
</dbReference>
<dbReference type="MalaCards" id="CHRDL1"/>
<dbReference type="MIM" id="300350">
    <property type="type" value="gene"/>
</dbReference>
<dbReference type="MIM" id="309300">
    <property type="type" value="phenotype"/>
</dbReference>
<dbReference type="neXtProt" id="NX_Q9BU40"/>
<dbReference type="OpenTargets" id="ENSG00000101938"/>
<dbReference type="Orphanet" id="91489">
    <property type="disease" value="Isolated congenital megalocornea"/>
</dbReference>
<dbReference type="PharmGKB" id="PA134933380"/>
<dbReference type="VEuPathDB" id="HostDB:ENSG00000101938"/>
<dbReference type="eggNOG" id="ENOG502QQFQ">
    <property type="taxonomic scope" value="Eukaryota"/>
</dbReference>
<dbReference type="GeneTree" id="ENSGT00940000160983"/>
<dbReference type="HOGENOM" id="CLU_048288_0_0_1"/>
<dbReference type="InParanoid" id="Q9BU40"/>
<dbReference type="OMA" id="ECKKINC"/>
<dbReference type="OrthoDB" id="8173378at2759"/>
<dbReference type="PAN-GO" id="Q9BU40">
    <property type="GO annotations" value="3 GO annotations based on evolutionary models"/>
</dbReference>
<dbReference type="PhylomeDB" id="Q9BU40"/>
<dbReference type="TreeFam" id="TF106451"/>
<dbReference type="PathwayCommons" id="Q9BU40"/>
<dbReference type="Reactome" id="R-HSA-201451">
    <property type="pathway name" value="Signaling by BMP"/>
</dbReference>
<dbReference type="Reactome" id="R-HSA-381426">
    <property type="pathway name" value="Regulation of Insulin-like Growth Factor (IGF) transport and uptake by Insulin-like Growth Factor Binding Proteins (IGFBPs)"/>
</dbReference>
<dbReference type="Reactome" id="R-HSA-8957275">
    <property type="pathway name" value="Post-translational protein phosphorylation"/>
</dbReference>
<dbReference type="SignaLink" id="Q9BU40"/>
<dbReference type="BioGRID-ORCS" id="91851">
    <property type="hits" value="10 hits in 760 CRISPR screens"/>
</dbReference>
<dbReference type="ChiTaRS" id="CHRDL1">
    <property type="organism name" value="human"/>
</dbReference>
<dbReference type="GenomeRNAi" id="91851"/>
<dbReference type="Pharos" id="Q9BU40">
    <property type="development level" value="Tbio"/>
</dbReference>
<dbReference type="PRO" id="PR:Q9BU40"/>
<dbReference type="Proteomes" id="UP000005640">
    <property type="component" value="Chromosome X"/>
</dbReference>
<dbReference type="RNAct" id="Q9BU40">
    <property type="molecule type" value="protein"/>
</dbReference>
<dbReference type="Bgee" id="ENSG00000101938">
    <property type="expression patterns" value="Expressed in decidua and 181 other cell types or tissues"/>
</dbReference>
<dbReference type="ExpressionAtlas" id="Q9BU40">
    <property type="expression patterns" value="baseline and differential"/>
</dbReference>
<dbReference type="GO" id="GO:0005788">
    <property type="term" value="C:endoplasmic reticulum lumen"/>
    <property type="evidence" value="ECO:0000304"/>
    <property type="project" value="Reactome"/>
</dbReference>
<dbReference type="GO" id="GO:0005576">
    <property type="term" value="C:extracellular region"/>
    <property type="evidence" value="ECO:0000304"/>
    <property type="project" value="Reactome"/>
</dbReference>
<dbReference type="GO" id="GO:0005886">
    <property type="term" value="C:plasma membrane"/>
    <property type="evidence" value="ECO:0007669"/>
    <property type="project" value="GOC"/>
</dbReference>
<dbReference type="GO" id="GO:0045202">
    <property type="term" value="C:synapse"/>
    <property type="evidence" value="ECO:0007669"/>
    <property type="project" value="GOC"/>
</dbReference>
<dbReference type="GO" id="GO:0036122">
    <property type="term" value="F:BMP binding"/>
    <property type="evidence" value="ECO:0000318"/>
    <property type="project" value="GO_Central"/>
</dbReference>
<dbReference type="GO" id="GO:0050431">
    <property type="term" value="F:transforming growth factor beta binding"/>
    <property type="evidence" value="ECO:0007669"/>
    <property type="project" value="Ensembl"/>
</dbReference>
<dbReference type="GO" id="GO:0097113">
    <property type="term" value="P:AMPA glutamate receptor clustering"/>
    <property type="evidence" value="ECO:0007669"/>
    <property type="project" value="Ensembl"/>
</dbReference>
<dbReference type="GO" id="GO:0030509">
    <property type="term" value="P:BMP signaling pathway"/>
    <property type="evidence" value="ECO:0007669"/>
    <property type="project" value="Ensembl"/>
</dbReference>
<dbReference type="GO" id="GO:0030154">
    <property type="term" value="P:cell differentiation"/>
    <property type="evidence" value="ECO:0000318"/>
    <property type="project" value="GO_Central"/>
</dbReference>
<dbReference type="GO" id="GO:0000578">
    <property type="term" value="P:embryonic axis specification"/>
    <property type="evidence" value="ECO:0007669"/>
    <property type="project" value="Ensembl"/>
</dbReference>
<dbReference type="GO" id="GO:0098976">
    <property type="term" value="P:excitatory chemical synaptic transmission"/>
    <property type="evidence" value="ECO:0007669"/>
    <property type="project" value="Ensembl"/>
</dbReference>
<dbReference type="GO" id="GO:0001654">
    <property type="term" value="P:eye development"/>
    <property type="evidence" value="ECO:0000315"/>
    <property type="project" value="UniProtKB"/>
</dbReference>
<dbReference type="GO" id="GO:0030514">
    <property type="term" value="P:negative regulation of BMP signaling pathway"/>
    <property type="evidence" value="ECO:0000318"/>
    <property type="project" value="GO_Central"/>
</dbReference>
<dbReference type="GO" id="GO:0001503">
    <property type="term" value="P:ossification"/>
    <property type="evidence" value="ECO:0007669"/>
    <property type="project" value="UniProtKB-KW"/>
</dbReference>
<dbReference type="GO" id="GO:0048167">
    <property type="term" value="P:regulation of synaptic plasticity"/>
    <property type="evidence" value="ECO:0007669"/>
    <property type="project" value="Ensembl"/>
</dbReference>
<dbReference type="GO" id="GO:0060074">
    <property type="term" value="P:synapse maturation"/>
    <property type="evidence" value="ECO:0007669"/>
    <property type="project" value="Ensembl"/>
</dbReference>
<dbReference type="FunFam" id="2.10.70.10:FF:000005">
    <property type="entry name" value="Chordin-like 1, isoform CRA_c"/>
    <property type="match status" value="2"/>
</dbReference>
<dbReference type="Gene3D" id="6.20.200.20">
    <property type="match status" value="1"/>
</dbReference>
<dbReference type="Gene3D" id="2.10.70.10">
    <property type="entry name" value="Complement Module, domain 1"/>
    <property type="match status" value="2"/>
</dbReference>
<dbReference type="InterPro" id="IPR045717">
    <property type="entry name" value="CHRDL1/2"/>
</dbReference>
<dbReference type="InterPro" id="IPR045716">
    <property type="entry name" value="CHRDL_1/2_C"/>
</dbReference>
<dbReference type="InterPro" id="IPR001007">
    <property type="entry name" value="VWF_dom"/>
</dbReference>
<dbReference type="PANTHER" id="PTHR46303:SF2">
    <property type="entry name" value="CHORDIN-LIKE PROTEIN 1"/>
    <property type="match status" value="1"/>
</dbReference>
<dbReference type="PANTHER" id="PTHR46303">
    <property type="entry name" value="VWFC DOMAIN-CONTAINING PROTEIN"/>
    <property type="match status" value="1"/>
</dbReference>
<dbReference type="Pfam" id="PF19548">
    <property type="entry name" value="CHRDL_1_2_C"/>
    <property type="match status" value="1"/>
</dbReference>
<dbReference type="Pfam" id="PF00093">
    <property type="entry name" value="VWC"/>
    <property type="match status" value="3"/>
</dbReference>
<dbReference type="SMART" id="SM00214">
    <property type="entry name" value="VWC"/>
    <property type="match status" value="3"/>
</dbReference>
<dbReference type="SUPFAM" id="SSF57603">
    <property type="entry name" value="FnI-like domain"/>
    <property type="match status" value="3"/>
</dbReference>
<dbReference type="PROSITE" id="PS01208">
    <property type="entry name" value="VWFC_1"/>
    <property type="match status" value="3"/>
</dbReference>
<dbReference type="PROSITE" id="PS50184">
    <property type="entry name" value="VWFC_2"/>
    <property type="match status" value="3"/>
</dbReference>
<proteinExistence type="evidence at protein level"/>
<organism>
    <name type="scientific">Homo sapiens</name>
    <name type="common">Human</name>
    <dbReference type="NCBI Taxonomy" id="9606"/>
    <lineage>
        <taxon>Eukaryota</taxon>
        <taxon>Metazoa</taxon>
        <taxon>Chordata</taxon>
        <taxon>Craniata</taxon>
        <taxon>Vertebrata</taxon>
        <taxon>Euteleostomi</taxon>
        <taxon>Mammalia</taxon>
        <taxon>Eutheria</taxon>
        <taxon>Euarchontoglires</taxon>
        <taxon>Primates</taxon>
        <taxon>Haplorrhini</taxon>
        <taxon>Catarrhini</taxon>
        <taxon>Hominidae</taxon>
        <taxon>Homo</taxon>
    </lineage>
</organism>
<feature type="signal peptide" evidence="2">
    <location>
        <begin position="1"/>
        <end position="27"/>
    </location>
</feature>
<feature type="chain" id="PRO_0000005368" description="Chordin-like protein 1">
    <location>
        <begin position="28"/>
        <end position="456"/>
    </location>
</feature>
<feature type="domain" description="VWFC 1" evidence="3">
    <location>
        <begin position="35"/>
        <end position="100"/>
    </location>
</feature>
<feature type="domain" description="VWFC 2" evidence="3">
    <location>
        <begin position="113"/>
        <end position="179"/>
    </location>
</feature>
<feature type="domain" description="VWFC 3" evidence="3">
    <location>
        <begin position="258"/>
        <end position="323"/>
    </location>
</feature>
<feature type="region of interest" description="Disordered" evidence="4">
    <location>
        <begin position="202"/>
        <end position="223"/>
    </location>
</feature>
<feature type="short sequence motif" description="Cell attachment site" evidence="2">
    <location>
        <begin position="179"/>
        <end position="181"/>
    </location>
</feature>
<feature type="glycosylation site" description="N-linked (GlcNAc...) asparagine" evidence="2">
    <location>
        <position position="118"/>
    </location>
</feature>
<feature type="glycosylation site" description="N-linked (GlcNAc...) asparagine" evidence="2">
    <location>
        <position position="291"/>
    </location>
</feature>
<feature type="splice variant" id="VSP_060078" description="In isoform 3.">
    <original>P</original>
    <variation>PE</variation>
    <location>
        <position position="100"/>
    </location>
</feature>
<feature type="splice variant" id="VSP_060079" description="In isoform 2.">
    <location>
        <begin position="101"/>
        <end position="179"/>
    </location>
</feature>
<feature type="splice variant" id="VSP_060080" description="In isoform 2, isoform 3 and isoform 4.">
    <original>K</original>
    <variation>KE</variation>
    <location>
        <position position="328"/>
    </location>
</feature>
<feature type="sequence variant" id="VAR_068175" description="In MGC1; dbSNP:rs387906713." evidence="6">
    <original>C</original>
    <variation>F</variation>
    <location>
        <position position="260"/>
    </location>
</feature>
<accession>Q9BU40</accession>
<accession>B1AKD0</accession>
<accession>B4DMP3</accession>
<accession>D3DUY6</accession>
<accession>E9PGS5</accession>
<accession>Q539E4</accession>
<accession>Q9Y3H7</accession>
<gene>
    <name type="primary">CHRDL1</name>
    <name type="synonym">NRLN1</name>
</gene>
<reference key="1">
    <citation type="journal article" date="2008" name="Mol. Vis.">
        <title>Chordin-like 1, a bone morphogenetic protein-4 antagonist, is upregulated by hypoxia in human retinal pericytes and plays a role in regulating angiogenesis.</title>
        <authorList>
            <person name="Kane R."/>
            <person name="Godson C."/>
            <person name="O'Brien C."/>
        </authorList>
    </citation>
    <scope>NUCLEOTIDE SEQUENCE [MRNA] (ISOFORM 3)</scope>
    <scope>FUNCTION</scope>
    <scope>TISSUE SPECIFICITY</scope>
    <scope>INDUCTION</scope>
</reference>
<reference key="2">
    <citation type="journal article" date="2004" name="Nat. Genet.">
        <title>Complete sequencing and characterization of 21,243 full-length human cDNAs.</title>
        <authorList>
            <person name="Ota T."/>
            <person name="Suzuki Y."/>
            <person name="Nishikawa T."/>
            <person name="Otsuki T."/>
            <person name="Sugiyama T."/>
            <person name="Irie R."/>
            <person name="Wakamatsu A."/>
            <person name="Hayashi K."/>
            <person name="Sato H."/>
            <person name="Nagai K."/>
            <person name="Kimura K."/>
            <person name="Makita H."/>
            <person name="Sekine M."/>
            <person name="Obayashi M."/>
            <person name="Nishi T."/>
            <person name="Shibahara T."/>
            <person name="Tanaka T."/>
            <person name="Ishii S."/>
            <person name="Yamamoto J."/>
            <person name="Saito K."/>
            <person name="Kawai Y."/>
            <person name="Isono Y."/>
            <person name="Nakamura Y."/>
            <person name="Nagahari K."/>
            <person name="Murakami K."/>
            <person name="Yasuda T."/>
            <person name="Iwayanagi T."/>
            <person name="Wagatsuma M."/>
            <person name="Shiratori A."/>
            <person name="Sudo H."/>
            <person name="Hosoiri T."/>
            <person name="Kaku Y."/>
            <person name="Kodaira H."/>
            <person name="Kondo H."/>
            <person name="Sugawara M."/>
            <person name="Takahashi M."/>
            <person name="Kanda K."/>
            <person name="Yokoi T."/>
            <person name="Furuya T."/>
            <person name="Kikkawa E."/>
            <person name="Omura Y."/>
            <person name="Abe K."/>
            <person name="Kamihara K."/>
            <person name="Katsuta N."/>
            <person name="Sato K."/>
            <person name="Tanikawa M."/>
            <person name="Yamazaki M."/>
            <person name="Ninomiya K."/>
            <person name="Ishibashi T."/>
            <person name="Yamashita H."/>
            <person name="Murakawa K."/>
            <person name="Fujimori K."/>
            <person name="Tanai H."/>
            <person name="Kimata M."/>
            <person name="Watanabe M."/>
            <person name="Hiraoka S."/>
            <person name="Chiba Y."/>
            <person name="Ishida S."/>
            <person name="Ono Y."/>
            <person name="Takiguchi S."/>
            <person name="Watanabe S."/>
            <person name="Yosida M."/>
            <person name="Hotuta T."/>
            <person name="Kusano J."/>
            <person name="Kanehori K."/>
            <person name="Takahashi-Fujii A."/>
            <person name="Hara H."/>
            <person name="Tanase T.-O."/>
            <person name="Nomura Y."/>
            <person name="Togiya S."/>
            <person name="Komai F."/>
            <person name="Hara R."/>
            <person name="Takeuchi K."/>
            <person name="Arita M."/>
            <person name="Imose N."/>
            <person name="Musashino K."/>
            <person name="Yuuki H."/>
            <person name="Oshima A."/>
            <person name="Sasaki N."/>
            <person name="Aotsuka S."/>
            <person name="Yoshikawa Y."/>
            <person name="Matsunawa H."/>
            <person name="Ichihara T."/>
            <person name="Shiohata N."/>
            <person name="Sano S."/>
            <person name="Moriya S."/>
            <person name="Momiyama H."/>
            <person name="Satoh N."/>
            <person name="Takami S."/>
            <person name="Terashima Y."/>
            <person name="Suzuki O."/>
            <person name="Nakagawa S."/>
            <person name="Senoh A."/>
            <person name="Mizoguchi H."/>
            <person name="Goto Y."/>
            <person name="Shimizu F."/>
            <person name="Wakebe H."/>
            <person name="Hishigaki H."/>
            <person name="Watanabe T."/>
            <person name="Sugiyama A."/>
            <person name="Takemoto M."/>
            <person name="Kawakami B."/>
            <person name="Yamazaki M."/>
            <person name="Watanabe K."/>
            <person name="Kumagai A."/>
            <person name="Itakura S."/>
            <person name="Fukuzumi Y."/>
            <person name="Fujimori Y."/>
            <person name="Komiyama M."/>
            <person name="Tashiro H."/>
            <person name="Tanigami A."/>
            <person name="Fujiwara T."/>
            <person name="Ono T."/>
            <person name="Yamada K."/>
            <person name="Fujii Y."/>
            <person name="Ozaki K."/>
            <person name="Hirao M."/>
            <person name="Ohmori Y."/>
            <person name="Kawabata A."/>
            <person name="Hikiji T."/>
            <person name="Kobatake N."/>
            <person name="Inagaki H."/>
            <person name="Ikema Y."/>
            <person name="Okamoto S."/>
            <person name="Okitani R."/>
            <person name="Kawakami T."/>
            <person name="Noguchi S."/>
            <person name="Itoh T."/>
            <person name="Shigeta K."/>
            <person name="Senba T."/>
            <person name="Matsumura K."/>
            <person name="Nakajima Y."/>
            <person name="Mizuno T."/>
            <person name="Morinaga M."/>
            <person name="Sasaki M."/>
            <person name="Togashi T."/>
            <person name="Oyama M."/>
            <person name="Hata H."/>
            <person name="Watanabe M."/>
            <person name="Komatsu T."/>
            <person name="Mizushima-Sugano J."/>
            <person name="Satoh T."/>
            <person name="Shirai Y."/>
            <person name="Takahashi Y."/>
            <person name="Nakagawa K."/>
            <person name="Okumura K."/>
            <person name="Nagase T."/>
            <person name="Nomura N."/>
            <person name="Kikuchi H."/>
            <person name="Masuho Y."/>
            <person name="Yamashita R."/>
            <person name="Nakai K."/>
            <person name="Yada T."/>
            <person name="Nakamura Y."/>
            <person name="Ohara O."/>
            <person name="Isogai T."/>
            <person name="Sugano S."/>
        </authorList>
    </citation>
    <scope>NUCLEOTIDE SEQUENCE [LARGE SCALE MRNA] (ISOFORMS 2; 3 AND 4)</scope>
    <source>
        <tissue>Astrocyte</tissue>
        <tissue>Brain</tissue>
        <tissue>Uterus</tissue>
    </source>
</reference>
<reference key="3">
    <citation type="journal article" date="2005" name="Nature">
        <title>The DNA sequence of the human X chromosome.</title>
        <authorList>
            <person name="Ross M.T."/>
            <person name="Grafham D.V."/>
            <person name="Coffey A.J."/>
            <person name="Scherer S."/>
            <person name="McLay K."/>
            <person name="Muzny D."/>
            <person name="Platzer M."/>
            <person name="Howell G.R."/>
            <person name="Burrows C."/>
            <person name="Bird C.P."/>
            <person name="Frankish A."/>
            <person name="Lovell F.L."/>
            <person name="Howe K.L."/>
            <person name="Ashurst J.L."/>
            <person name="Fulton R.S."/>
            <person name="Sudbrak R."/>
            <person name="Wen G."/>
            <person name="Jones M.C."/>
            <person name="Hurles M.E."/>
            <person name="Andrews T.D."/>
            <person name="Scott C.E."/>
            <person name="Searle S."/>
            <person name="Ramser J."/>
            <person name="Whittaker A."/>
            <person name="Deadman R."/>
            <person name="Carter N.P."/>
            <person name="Hunt S.E."/>
            <person name="Chen R."/>
            <person name="Cree A."/>
            <person name="Gunaratne P."/>
            <person name="Havlak P."/>
            <person name="Hodgson A."/>
            <person name="Metzker M.L."/>
            <person name="Richards S."/>
            <person name="Scott G."/>
            <person name="Steffen D."/>
            <person name="Sodergren E."/>
            <person name="Wheeler D.A."/>
            <person name="Worley K.C."/>
            <person name="Ainscough R."/>
            <person name="Ambrose K.D."/>
            <person name="Ansari-Lari M.A."/>
            <person name="Aradhya S."/>
            <person name="Ashwell R.I."/>
            <person name="Babbage A.K."/>
            <person name="Bagguley C.L."/>
            <person name="Ballabio A."/>
            <person name="Banerjee R."/>
            <person name="Barker G.E."/>
            <person name="Barlow K.F."/>
            <person name="Barrett I.P."/>
            <person name="Bates K.N."/>
            <person name="Beare D.M."/>
            <person name="Beasley H."/>
            <person name="Beasley O."/>
            <person name="Beck A."/>
            <person name="Bethel G."/>
            <person name="Blechschmidt K."/>
            <person name="Brady N."/>
            <person name="Bray-Allen S."/>
            <person name="Bridgeman A.M."/>
            <person name="Brown A.J."/>
            <person name="Brown M.J."/>
            <person name="Bonnin D."/>
            <person name="Bruford E.A."/>
            <person name="Buhay C."/>
            <person name="Burch P."/>
            <person name="Burford D."/>
            <person name="Burgess J."/>
            <person name="Burrill W."/>
            <person name="Burton J."/>
            <person name="Bye J.M."/>
            <person name="Carder C."/>
            <person name="Carrel L."/>
            <person name="Chako J."/>
            <person name="Chapman J.C."/>
            <person name="Chavez D."/>
            <person name="Chen E."/>
            <person name="Chen G."/>
            <person name="Chen Y."/>
            <person name="Chen Z."/>
            <person name="Chinault C."/>
            <person name="Ciccodicola A."/>
            <person name="Clark S.Y."/>
            <person name="Clarke G."/>
            <person name="Clee C.M."/>
            <person name="Clegg S."/>
            <person name="Clerc-Blankenburg K."/>
            <person name="Clifford K."/>
            <person name="Cobley V."/>
            <person name="Cole C.G."/>
            <person name="Conquer J.S."/>
            <person name="Corby N."/>
            <person name="Connor R.E."/>
            <person name="David R."/>
            <person name="Davies J."/>
            <person name="Davis C."/>
            <person name="Davis J."/>
            <person name="Delgado O."/>
            <person name="Deshazo D."/>
            <person name="Dhami P."/>
            <person name="Ding Y."/>
            <person name="Dinh H."/>
            <person name="Dodsworth S."/>
            <person name="Draper H."/>
            <person name="Dugan-Rocha S."/>
            <person name="Dunham A."/>
            <person name="Dunn M."/>
            <person name="Durbin K.J."/>
            <person name="Dutta I."/>
            <person name="Eades T."/>
            <person name="Ellwood M."/>
            <person name="Emery-Cohen A."/>
            <person name="Errington H."/>
            <person name="Evans K.L."/>
            <person name="Faulkner L."/>
            <person name="Francis F."/>
            <person name="Frankland J."/>
            <person name="Fraser A.E."/>
            <person name="Galgoczy P."/>
            <person name="Gilbert J."/>
            <person name="Gill R."/>
            <person name="Gloeckner G."/>
            <person name="Gregory S.G."/>
            <person name="Gribble S."/>
            <person name="Griffiths C."/>
            <person name="Grocock R."/>
            <person name="Gu Y."/>
            <person name="Gwilliam R."/>
            <person name="Hamilton C."/>
            <person name="Hart E.A."/>
            <person name="Hawes A."/>
            <person name="Heath P.D."/>
            <person name="Heitmann K."/>
            <person name="Hennig S."/>
            <person name="Hernandez J."/>
            <person name="Hinzmann B."/>
            <person name="Ho S."/>
            <person name="Hoffs M."/>
            <person name="Howden P.J."/>
            <person name="Huckle E.J."/>
            <person name="Hume J."/>
            <person name="Hunt P.J."/>
            <person name="Hunt A.R."/>
            <person name="Isherwood J."/>
            <person name="Jacob L."/>
            <person name="Johnson D."/>
            <person name="Jones S."/>
            <person name="de Jong P.J."/>
            <person name="Joseph S.S."/>
            <person name="Keenan S."/>
            <person name="Kelly S."/>
            <person name="Kershaw J.K."/>
            <person name="Khan Z."/>
            <person name="Kioschis P."/>
            <person name="Klages S."/>
            <person name="Knights A.J."/>
            <person name="Kosiura A."/>
            <person name="Kovar-Smith C."/>
            <person name="Laird G.K."/>
            <person name="Langford C."/>
            <person name="Lawlor S."/>
            <person name="Leversha M."/>
            <person name="Lewis L."/>
            <person name="Liu W."/>
            <person name="Lloyd C."/>
            <person name="Lloyd D.M."/>
            <person name="Loulseged H."/>
            <person name="Loveland J.E."/>
            <person name="Lovell J.D."/>
            <person name="Lozado R."/>
            <person name="Lu J."/>
            <person name="Lyne R."/>
            <person name="Ma J."/>
            <person name="Maheshwari M."/>
            <person name="Matthews L.H."/>
            <person name="McDowall J."/>
            <person name="McLaren S."/>
            <person name="McMurray A."/>
            <person name="Meidl P."/>
            <person name="Meitinger T."/>
            <person name="Milne S."/>
            <person name="Miner G."/>
            <person name="Mistry S.L."/>
            <person name="Morgan M."/>
            <person name="Morris S."/>
            <person name="Mueller I."/>
            <person name="Mullikin J.C."/>
            <person name="Nguyen N."/>
            <person name="Nordsiek G."/>
            <person name="Nyakatura G."/>
            <person name="O'dell C.N."/>
            <person name="Okwuonu G."/>
            <person name="Palmer S."/>
            <person name="Pandian R."/>
            <person name="Parker D."/>
            <person name="Parrish J."/>
            <person name="Pasternak S."/>
            <person name="Patel D."/>
            <person name="Pearce A.V."/>
            <person name="Pearson D.M."/>
            <person name="Pelan S.E."/>
            <person name="Perez L."/>
            <person name="Porter K.M."/>
            <person name="Ramsey Y."/>
            <person name="Reichwald K."/>
            <person name="Rhodes S."/>
            <person name="Ridler K.A."/>
            <person name="Schlessinger D."/>
            <person name="Schueler M.G."/>
            <person name="Sehra H.K."/>
            <person name="Shaw-Smith C."/>
            <person name="Shen H."/>
            <person name="Sheridan E.M."/>
            <person name="Shownkeen R."/>
            <person name="Skuce C.D."/>
            <person name="Smith M.L."/>
            <person name="Sotheran E.C."/>
            <person name="Steingruber H.E."/>
            <person name="Steward C.A."/>
            <person name="Storey R."/>
            <person name="Swann R.M."/>
            <person name="Swarbreck D."/>
            <person name="Tabor P.E."/>
            <person name="Taudien S."/>
            <person name="Taylor T."/>
            <person name="Teague B."/>
            <person name="Thomas K."/>
            <person name="Thorpe A."/>
            <person name="Timms K."/>
            <person name="Tracey A."/>
            <person name="Trevanion S."/>
            <person name="Tromans A.C."/>
            <person name="d'Urso M."/>
            <person name="Verduzco D."/>
            <person name="Villasana D."/>
            <person name="Waldron L."/>
            <person name="Wall M."/>
            <person name="Wang Q."/>
            <person name="Warren J."/>
            <person name="Warry G.L."/>
            <person name="Wei X."/>
            <person name="West A."/>
            <person name="Whitehead S.L."/>
            <person name="Whiteley M.N."/>
            <person name="Wilkinson J.E."/>
            <person name="Willey D.L."/>
            <person name="Williams G."/>
            <person name="Williams L."/>
            <person name="Williamson A."/>
            <person name="Williamson H."/>
            <person name="Wilming L."/>
            <person name="Woodmansey R.L."/>
            <person name="Wray P.W."/>
            <person name="Yen J."/>
            <person name="Zhang J."/>
            <person name="Zhou J."/>
            <person name="Zoghbi H."/>
            <person name="Zorilla S."/>
            <person name="Buck D."/>
            <person name="Reinhardt R."/>
            <person name="Poustka A."/>
            <person name="Rosenthal A."/>
            <person name="Lehrach H."/>
            <person name="Meindl A."/>
            <person name="Minx P.J."/>
            <person name="Hillier L.W."/>
            <person name="Willard H.F."/>
            <person name="Wilson R.K."/>
            <person name="Waterston R.H."/>
            <person name="Rice C.M."/>
            <person name="Vaudin M."/>
            <person name="Coulson A."/>
            <person name="Nelson D.L."/>
            <person name="Weinstock G."/>
            <person name="Sulston J.E."/>
            <person name="Durbin R.M."/>
            <person name="Hubbard T."/>
            <person name="Gibbs R.A."/>
            <person name="Beck S."/>
            <person name="Rogers J."/>
            <person name="Bentley D.R."/>
        </authorList>
    </citation>
    <scope>NUCLEOTIDE SEQUENCE [LARGE SCALE GENOMIC DNA]</scope>
</reference>
<reference key="4">
    <citation type="submission" date="2005-09" db="EMBL/GenBank/DDBJ databases">
        <authorList>
            <person name="Mural R.J."/>
            <person name="Istrail S."/>
            <person name="Sutton G.G."/>
            <person name="Florea L."/>
            <person name="Halpern A.L."/>
            <person name="Mobarry C.M."/>
            <person name="Lippert R."/>
            <person name="Walenz B."/>
            <person name="Shatkay H."/>
            <person name="Dew I."/>
            <person name="Miller J.R."/>
            <person name="Flanigan M.J."/>
            <person name="Edwards N.J."/>
            <person name="Bolanos R."/>
            <person name="Fasulo D."/>
            <person name="Halldorsson B.V."/>
            <person name="Hannenhalli S."/>
            <person name="Turner R."/>
            <person name="Yooseph S."/>
            <person name="Lu F."/>
            <person name="Nusskern D.R."/>
            <person name="Shue B.C."/>
            <person name="Zheng X.H."/>
            <person name="Zhong F."/>
            <person name="Delcher A.L."/>
            <person name="Huson D.H."/>
            <person name="Kravitz S.A."/>
            <person name="Mouchard L."/>
            <person name="Reinert K."/>
            <person name="Remington K.A."/>
            <person name="Clark A.G."/>
            <person name="Waterman M.S."/>
            <person name="Eichler E.E."/>
            <person name="Adams M.D."/>
            <person name="Hunkapiller M.W."/>
            <person name="Myers E.W."/>
            <person name="Venter J.C."/>
        </authorList>
    </citation>
    <scope>NUCLEOTIDE SEQUENCE [LARGE SCALE GENOMIC DNA]</scope>
</reference>
<reference key="5">
    <citation type="journal article" date="2004" name="Genome Res.">
        <title>The status, quality, and expansion of the NIH full-length cDNA project: the Mammalian Gene Collection (MGC).</title>
        <authorList>
            <consortium name="The MGC Project Team"/>
        </authorList>
    </citation>
    <scope>NUCLEOTIDE SEQUENCE [LARGE SCALE MRNA] (ISOFORM 1)</scope>
    <source>
        <tissue>Lung</tissue>
    </source>
</reference>
<reference key="6">
    <citation type="journal article" date="2012" name="Am. J. Hum. Genet.">
        <title>X-linked megalocornea caused by mutations in CHRDL1 identifies an essential role for ventroptin in anterior segment development.</title>
        <authorList>
            <person name="Webb T.R."/>
            <person name="Matarin M."/>
            <person name="Gardner J.C."/>
            <person name="Kelberman D."/>
            <person name="Hassan H."/>
            <person name="Ang W."/>
            <person name="Michaelides M."/>
            <person name="Ruddle J.B."/>
            <person name="Pennell C.E."/>
            <person name="Yazar S."/>
            <person name="Khor C.C."/>
            <person name="Aung T."/>
            <person name="Yogarajah M."/>
            <person name="Robson A.G."/>
            <person name="Holder G.E."/>
            <person name="Cheetham M.E."/>
            <person name="Traboulsi E.I."/>
            <person name="Moore A.T."/>
            <person name="Sowden J.C."/>
            <person name="Sisodiya S.M."/>
            <person name="Mackey D.A."/>
            <person name="Tuft S.J."/>
            <person name="Hardcastle A.J."/>
        </authorList>
    </citation>
    <scope>FUNCTION</scope>
    <scope>TISSUE SPECIFICITY</scope>
    <scope>VARIANT MGC1 PHE-260</scope>
</reference>
<comment type="function">
    <text evidence="1 5 6">Antagonizes the function of BMP4 by binding to it and preventing its interaction with receptors. Alters the fate commitment of neural stem cells from gliogenesis to neurogenesis. Contributes to neuronal differentiation of neural stem cells in the brain by preventing the adoption of a glial fate. May play a crucial role in dorsoventral axis formation. May play a role in embryonic bone formation (By similarity). May also play an important role in regulating retinal angiogenesis through modulation of BMP4 actions in endothelial cells. Plays a role during anterior segment eye development.</text>
</comment>
<comment type="subcellular location">
    <subcellularLocation>
        <location evidence="7">Secreted</location>
    </subcellularLocation>
</comment>
<comment type="alternative products">
    <event type="alternative splicing"/>
    <isoform>
        <id>Q9BU40-6</id>
        <name>1</name>
        <sequence type="displayed"/>
    </isoform>
    <isoform>
        <id>Q9BU40-3</id>
        <name>2</name>
        <sequence type="described" ref="VSP_060079 VSP_060080"/>
    </isoform>
    <isoform>
        <id>Q9BU40-4</id>
        <name>3</name>
        <sequence type="described" ref="VSP_060078 VSP_060080"/>
    </isoform>
    <isoform>
        <id>Q9BU40-5</id>
        <name>4</name>
        <sequence type="described" ref="VSP_060080"/>
    </isoform>
</comment>
<comment type="tissue specificity">
    <text evidence="5 6">Expressed in the developing cornea and in the eye anterior segment in addition to the retina. Differentially expressed in the fetal brain. There is high expression in cerebellum and neocortex. Expressed in retinal pericytes.</text>
</comment>
<comment type="induction">
    <text evidence="5">By hypoxia in retinal pericytes.</text>
</comment>
<comment type="disease" evidence="6">
    <disease id="DI-03435">
        <name>Megalocornea 1, X-linked</name>
        <acronym>MGC1</acronym>
        <description>An eye disorder in which the corneal diameter is bilaterally enlarged (greater than 13 mm) without an increase in intraocular pressure. It may also be referred to as anterior megalophthalmos, since the entire anterior segment is larger than normal. Features of megalocornea in addition to a deep anterior chamber include astigmatic refractive errors, atrophy of the iris stroma, miosis secondary to decreased function of the dilator muscle, iridodonesis, and tremulousness, subluxation, or dislocation of the lens. Whereas most affected individuals exhibit normal ocular function, complications include cataract development and glaucoma following lenticular dislocation or subluxation.</description>
        <dbReference type="MIM" id="309300"/>
    </disease>
    <text>The disease is caused by variants affecting the gene represented in this entry.</text>
</comment>
<comment type="caution">
    <text evidence="7">It is uncertain whether Met-1 or Met-7 is the initiator.</text>
</comment>
<keyword id="KW-0025">Alternative splicing</keyword>
<keyword id="KW-0217">Developmental protein</keyword>
<keyword id="KW-0221">Differentiation</keyword>
<keyword id="KW-0225">Disease variant</keyword>
<keyword id="KW-0325">Glycoprotein</keyword>
<keyword id="KW-0524">Neurogenesis</keyword>
<keyword id="KW-0892">Osteogenesis</keyword>
<keyword id="KW-1267">Proteomics identification</keyword>
<keyword id="KW-1185">Reference proteome</keyword>
<keyword id="KW-0677">Repeat</keyword>
<keyword id="KW-0964">Secreted</keyword>
<keyword id="KW-0732">Signal</keyword>
<protein>
    <recommendedName>
        <fullName>Chordin-like protein 1</fullName>
    </recommendedName>
    <alternativeName>
        <fullName>Neuralin-1</fullName>
    </alternativeName>
    <alternativeName>
        <fullName>Neurogenesin-1</fullName>
    </alternativeName>
    <alternativeName>
        <fullName>Ventroptin</fullName>
    </alternativeName>
</protein>
<evidence type="ECO:0000250" key="1"/>
<evidence type="ECO:0000255" key="2"/>
<evidence type="ECO:0000255" key="3">
    <source>
        <dbReference type="PROSITE-ProRule" id="PRU00220"/>
    </source>
</evidence>
<evidence type="ECO:0000256" key="4">
    <source>
        <dbReference type="SAM" id="MobiDB-lite"/>
    </source>
</evidence>
<evidence type="ECO:0000269" key="5">
    <source>
    </source>
</evidence>
<evidence type="ECO:0000269" key="6">
    <source>
    </source>
</evidence>
<evidence type="ECO:0000305" key="7"/>